<dbReference type="EMBL" id="CP000100">
    <property type="protein sequence ID" value="ABB58571.1"/>
    <property type="status" value="ALT_INIT"/>
    <property type="molecule type" value="Genomic_DNA"/>
</dbReference>
<dbReference type="RefSeq" id="WP_039755904.1">
    <property type="nucleotide sequence ID" value="NZ_JACJTX010000001.1"/>
</dbReference>
<dbReference type="SMR" id="Q31K48"/>
<dbReference type="STRING" id="1140.Synpcc7942_2541"/>
<dbReference type="PaxDb" id="1140-Synpcc7942_2541"/>
<dbReference type="GeneID" id="72431432"/>
<dbReference type="KEGG" id="syf:Synpcc7942_2541"/>
<dbReference type="eggNOG" id="COG0335">
    <property type="taxonomic scope" value="Bacteria"/>
</dbReference>
<dbReference type="HOGENOM" id="CLU_103507_2_0_3"/>
<dbReference type="OrthoDB" id="9803541at2"/>
<dbReference type="BioCyc" id="SYNEL:SYNPCC7942_2541-MONOMER"/>
<dbReference type="Proteomes" id="UP000889800">
    <property type="component" value="Chromosome"/>
</dbReference>
<dbReference type="GO" id="GO:0022625">
    <property type="term" value="C:cytosolic large ribosomal subunit"/>
    <property type="evidence" value="ECO:0007669"/>
    <property type="project" value="TreeGrafter"/>
</dbReference>
<dbReference type="GO" id="GO:0003735">
    <property type="term" value="F:structural constituent of ribosome"/>
    <property type="evidence" value="ECO:0007669"/>
    <property type="project" value="InterPro"/>
</dbReference>
<dbReference type="GO" id="GO:0006412">
    <property type="term" value="P:translation"/>
    <property type="evidence" value="ECO:0007669"/>
    <property type="project" value="UniProtKB-UniRule"/>
</dbReference>
<dbReference type="FunFam" id="2.30.30.790:FF:000001">
    <property type="entry name" value="50S ribosomal protein L19"/>
    <property type="match status" value="1"/>
</dbReference>
<dbReference type="Gene3D" id="2.30.30.790">
    <property type="match status" value="1"/>
</dbReference>
<dbReference type="HAMAP" id="MF_00402">
    <property type="entry name" value="Ribosomal_bL19"/>
    <property type="match status" value="1"/>
</dbReference>
<dbReference type="InterPro" id="IPR001857">
    <property type="entry name" value="Ribosomal_bL19"/>
</dbReference>
<dbReference type="InterPro" id="IPR018257">
    <property type="entry name" value="Ribosomal_bL19_CS"/>
</dbReference>
<dbReference type="InterPro" id="IPR038657">
    <property type="entry name" value="Ribosomal_bL19_sf"/>
</dbReference>
<dbReference type="InterPro" id="IPR008991">
    <property type="entry name" value="Translation_prot_SH3-like_sf"/>
</dbReference>
<dbReference type="NCBIfam" id="TIGR01024">
    <property type="entry name" value="rplS_bact"/>
    <property type="match status" value="1"/>
</dbReference>
<dbReference type="PANTHER" id="PTHR15680:SF9">
    <property type="entry name" value="LARGE RIBOSOMAL SUBUNIT PROTEIN BL19M"/>
    <property type="match status" value="1"/>
</dbReference>
<dbReference type="PANTHER" id="PTHR15680">
    <property type="entry name" value="RIBOSOMAL PROTEIN L19"/>
    <property type="match status" value="1"/>
</dbReference>
<dbReference type="Pfam" id="PF01245">
    <property type="entry name" value="Ribosomal_L19"/>
    <property type="match status" value="1"/>
</dbReference>
<dbReference type="PIRSF" id="PIRSF002191">
    <property type="entry name" value="Ribosomal_L19"/>
    <property type="match status" value="1"/>
</dbReference>
<dbReference type="PRINTS" id="PR00061">
    <property type="entry name" value="RIBOSOMALL19"/>
</dbReference>
<dbReference type="SUPFAM" id="SSF50104">
    <property type="entry name" value="Translation proteins SH3-like domain"/>
    <property type="match status" value="1"/>
</dbReference>
<dbReference type="PROSITE" id="PS01015">
    <property type="entry name" value="RIBOSOMAL_L19"/>
    <property type="match status" value="1"/>
</dbReference>
<accession>Q31K48</accession>
<name>RL19_SYNE7</name>
<gene>
    <name evidence="1" type="primary">rplS</name>
    <name evidence="1" type="synonym">rpl19</name>
    <name type="ordered locus">Synpcc7942_2541</name>
</gene>
<evidence type="ECO:0000255" key="1">
    <source>
        <dbReference type="HAMAP-Rule" id="MF_00402"/>
    </source>
</evidence>
<evidence type="ECO:0000305" key="2"/>
<keyword id="KW-1185">Reference proteome</keyword>
<keyword id="KW-0687">Ribonucleoprotein</keyword>
<keyword id="KW-0689">Ribosomal protein</keyword>
<reference key="1">
    <citation type="submission" date="2005-08" db="EMBL/GenBank/DDBJ databases">
        <title>Complete sequence of chromosome 1 of Synechococcus elongatus PCC 7942.</title>
        <authorList>
            <consortium name="US DOE Joint Genome Institute"/>
            <person name="Copeland A."/>
            <person name="Lucas S."/>
            <person name="Lapidus A."/>
            <person name="Barry K."/>
            <person name="Detter J.C."/>
            <person name="Glavina T."/>
            <person name="Hammon N."/>
            <person name="Israni S."/>
            <person name="Pitluck S."/>
            <person name="Schmutz J."/>
            <person name="Larimer F."/>
            <person name="Land M."/>
            <person name="Kyrpides N."/>
            <person name="Lykidis A."/>
            <person name="Golden S."/>
            <person name="Richardson P."/>
        </authorList>
    </citation>
    <scope>NUCLEOTIDE SEQUENCE [LARGE SCALE GENOMIC DNA]</scope>
    <source>
        <strain>ATCC 33912 / PCC 7942 / FACHB-805</strain>
    </source>
</reference>
<protein>
    <recommendedName>
        <fullName evidence="1">Large ribosomal subunit protein bL19</fullName>
    </recommendedName>
    <alternativeName>
        <fullName evidence="2">50S ribosomal protein L19</fullName>
    </alternativeName>
</protein>
<feature type="chain" id="PRO_0000252556" description="Large ribosomal subunit protein bL19">
    <location>
        <begin position="1"/>
        <end position="120"/>
    </location>
</feature>
<proteinExistence type="inferred from homology"/>
<organism>
    <name type="scientific">Synechococcus elongatus (strain ATCC 33912 / PCC 7942 / FACHB-805)</name>
    <name type="common">Anacystis nidulans R2</name>
    <dbReference type="NCBI Taxonomy" id="1140"/>
    <lineage>
        <taxon>Bacteria</taxon>
        <taxon>Bacillati</taxon>
        <taxon>Cyanobacteriota</taxon>
        <taxon>Cyanophyceae</taxon>
        <taxon>Synechococcales</taxon>
        <taxon>Synechococcaceae</taxon>
        <taxon>Synechococcus</taxon>
    </lineage>
</organism>
<comment type="function">
    <text evidence="1">This protein is located at the 30S-50S ribosomal subunit interface and may play a role in the structure and function of the aminoacyl-tRNA binding site.</text>
</comment>
<comment type="similarity">
    <text evidence="1">Belongs to the bacterial ribosomal protein bL19 family.</text>
</comment>
<comment type="sequence caution" evidence="2">
    <conflict type="erroneous initiation">
        <sequence resource="EMBL-CDS" id="ABB58571"/>
    </conflict>
</comment>
<sequence length="120" mass="13444">MGAQEIIRSIEAEYTKSDLPTIYVGDTVKVGVRIQEGGKERVQPYEGVVIANSGGGINESITVRRIFQGVGVERVFLLHSPAVASVQVLRRGRVRRAKLYYLRDRVGKATRVKQRFDRSI</sequence>